<name>URE2_BURCH</name>
<reference key="1">
    <citation type="submission" date="2006-08" db="EMBL/GenBank/DDBJ databases">
        <title>Complete sequence of chromosome 1 of Burkholderia cenocepacia HI2424.</title>
        <authorList>
            <person name="Copeland A."/>
            <person name="Lucas S."/>
            <person name="Lapidus A."/>
            <person name="Barry K."/>
            <person name="Detter J.C."/>
            <person name="Glavina del Rio T."/>
            <person name="Hammon N."/>
            <person name="Israni S."/>
            <person name="Pitluck S."/>
            <person name="Chain P."/>
            <person name="Malfatti S."/>
            <person name="Shin M."/>
            <person name="Vergez L."/>
            <person name="Schmutz J."/>
            <person name="Larimer F."/>
            <person name="Land M."/>
            <person name="Hauser L."/>
            <person name="Kyrpides N."/>
            <person name="Kim E."/>
            <person name="LiPuma J.J."/>
            <person name="Gonzalez C.F."/>
            <person name="Konstantinidis K."/>
            <person name="Tiedje J.M."/>
            <person name="Richardson P."/>
        </authorList>
    </citation>
    <scope>NUCLEOTIDE SEQUENCE [LARGE SCALE GENOMIC DNA]</scope>
    <source>
        <strain>HI2424</strain>
    </source>
</reference>
<proteinExistence type="inferred from homology"/>
<gene>
    <name evidence="1" type="primary">ureB</name>
    <name type="ordered locus">Bcen2424_0901</name>
</gene>
<feature type="chain" id="PRO_1000070720" description="Urease subunit beta">
    <location>
        <begin position="1"/>
        <end position="101"/>
    </location>
</feature>
<keyword id="KW-0963">Cytoplasm</keyword>
<keyword id="KW-0378">Hydrolase</keyword>
<comment type="catalytic activity">
    <reaction evidence="1">
        <text>urea + 2 H2O + H(+) = hydrogencarbonate + 2 NH4(+)</text>
        <dbReference type="Rhea" id="RHEA:20557"/>
        <dbReference type="ChEBI" id="CHEBI:15377"/>
        <dbReference type="ChEBI" id="CHEBI:15378"/>
        <dbReference type="ChEBI" id="CHEBI:16199"/>
        <dbReference type="ChEBI" id="CHEBI:17544"/>
        <dbReference type="ChEBI" id="CHEBI:28938"/>
        <dbReference type="EC" id="3.5.1.5"/>
    </reaction>
</comment>
<comment type="pathway">
    <text evidence="1">Nitrogen metabolism; urea degradation; CO(2) and NH(3) from urea (urease route): step 1/1.</text>
</comment>
<comment type="subunit">
    <text evidence="1">Heterotrimer of UreA (gamma), UreB (beta) and UreC (alpha) subunits. Three heterotrimers associate to form the active enzyme.</text>
</comment>
<comment type="subcellular location">
    <subcellularLocation>
        <location evidence="1">Cytoplasm</location>
    </subcellularLocation>
</comment>
<comment type="similarity">
    <text evidence="1">Belongs to the urease beta subunit family.</text>
</comment>
<protein>
    <recommendedName>
        <fullName evidence="1">Urease subunit beta</fullName>
        <ecNumber evidence="1">3.5.1.5</ecNumber>
    </recommendedName>
    <alternativeName>
        <fullName evidence="1">Urea amidohydrolase subunit beta</fullName>
    </alternativeName>
</protein>
<accession>A0K577</accession>
<dbReference type="EC" id="3.5.1.5" evidence="1"/>
<dbReference type="EMBL" id="CP000458">
    <property type="protein sequence ID" value="ABK07654.1"/>
    <property type="molecule type" value="Genomic_DNA"/>
</dbReference>
<dbReference type="RefSeq" id="WP_011544772.1">
    <property type="nucleotide sequence ID" value="NC_008542.1"/>
</dbReference>
<dbReference type="SMR" id="A0K577"/>
<dbReference type="KEGG" id="bch:Bcen2424_0901"/>
<dbReference type="HOGENOM" id="CLU_129707_1_1_4"/>
<dbReference type="UniPathway" id="UPA00258">
    <property type="reaction ID" value="UER00370"/>
</dbReference>
<dbReference type="GO" id="GO:0035550">
    <property type="term" value="C:urease complex"/>
    <property type="evidence" value="ECO:0007669"/>
    <property type="project" value="InterPro"/>
</dbReference>
<dbReference type="GO" id="GO:0009039">
    <property type="term" value="F:urease activity"/>
    <property type="evidence" value="ECO:0007669"/>
    <property type="project" value="UniProtKB-UniRule"/>
</dbReference>
<dbReference type="GO" id="GO:0043419">
    <property type="term" value="P:urea catabolic process"/>
    <property type="evidence" value="ECO:0007669"/>
    <property type="project" value="UniProtKB-UniRule"/>
</dbReference>
<dbReference type="CDD" id="cd00407">
    <property type="entry name" value="Urease_beta"/>
    <property type="match status" value="1"/>
</dbReference>
<dbReference type="FunFam" id="2.10.150.10:FF:000001">
    <property type="entry name" value="Urease subunit beta"/>
    <property type="match status" value="1"/>
</dbReference>
<dbReference type="Gene3D" id="2.10.150.10">
    <property type="entry name" value="Urease, beta subunit"/>
    <property type="match status" value="1"/>
</dbReference>
<dbReference type="HAMAP" id="MF_01954">
    <property type="entry name" value="Urease_beta"/>
    <property type="match status" value="1"/>
</dbReference>
<dbReference type="InterPro" id="IPR002019">
    <property type="entry name" value="Urease_beta-like"/>
</dbReference>
<dbReference type="InterPro" id="IPR036461">
    <property type="entry name" value="Urease_betasu_sf"/>
</dbReference>
<dbReference type="InterPro" id="IPR050069">
    <property type="entry name" value="Urease_subunit"/>
</dbReference>
<dbReference type="NCBIfam" id="NF009682">
    <property type="entry name" value="PRK13203.1"/>
    <property type="match status" value="1"/>
</dbReference>
<dbReference type="NCBIfam" id="TIGR00192">
    <property type="entry name" value="urease_beta"/>
    <property type="match status" value="1"/>
</dbReference>
<dbReference type="PANTHER" id="PTHR33569">
    <property type="entry name" value="UREASE"/>
    <property type="match status" value="1"/>
</dbReference>
<dbReference type="PANTHER" id="PTHR33569:SF1">
    <property type="entry name" value="UREASE"/>
    <property type="match status" value="1"/>
</dbReference>
<dbReference type="Pfam" id="PF00699">
    <property type="entry name" value="Urease_beta"/>
    <property type="match status" value="1"/>
</dbReference>
<dbReference type="SUPFAM" id="SSF51278">
    <property type="entry name" value="Urease, beta-subunit"/>
    <property type="match status" value="1"/>
</dbReference>
<sequence>MIPGEILTDDGEHELNAGRATLSLVVANTGDRPVQVGSHYHFFEVNDALSFDRAAARGFRLNIAAGTAVRFEPGQTRTVELVALAGERAVYGFQGKVMGPL</sequence>
<evidence type="ECO:0000255" key="1">
    <source>
        <dbReference type="HAMAP-Rule" id="MF_01954"/>
    </source>
</evidence>
<organism>
    <name type="scientific">Burkholderia cenocepacia (strain HI2424)</name>
    <dbReference type="NCBI Taxonomy" id="331272"/>
    <lineage>
        <taxon>Bacteria</taxon>
        <taxon>Pseudomonadati</taxon>
        <taxon>Pseudomonadota</taxon>
        <taxon>Betaproteobacteria</taxon>
        <taxon>Burkholderiales</taxon>
        <taxon>Burkholderiaceae</taxon>
        <taxon>Burkholderia</taxon>
        <taxon>Burkholderia cepacia complex</taxon>
    </lineage>
</organism>